<reference key="1">
    <citation type="journal article" date="2005" name="BMC Genomics">
        <title>Characterization of 954 bovine full-CDS cDNA sequences.</title>
        <authorList>
            <person name="Harhay G.P."/>
            <person name="Sonstegard T.S."/>
            <person name="Keele J.W."/>
            <person name="Heaton M.P."/>
            <person name="Clawson M.L."/>
            <person name="Snelling W.M."/>
            <person name="Wiedmann R.T."/>
            <person name="Van Tassell C.P."/>
            <person name="Smith T.P.L."/>
        </authorList>
    </citation>
    <scope>NUCLEOTIDE SEQUENCE [LARGE SCALE MRNA]</scope>
</reference>
<reference key="2">
    <citation type="submission" date="2005-09" db="EMBL/GenBank/DDBJ databases">
        <authorList>
            <consortium name="NIH - Mammalian Gene Collection (MGC) project"/>
        </authorList>
    </citation>
    <scope>NUCLEOTIDE SEQUENCE [LARGE SCALE MRNA]</scope>
    <source>
        <strain>Hereford</strain>
        <tissue>Thymus</tissue>
    </source>
</reference>
<comment type="function">
    <text evidence="2">Glutamine--tRNA ligase. Plays a critical role in brain development.</text>
</comment>
<comment type="catalytic activity">
    <reaction evidence="2">
        <text>tRNA(Gln) + L-glutamine + ATP = L-glutaminyl-tRNA(Gln) + AMP + diphosphate</text>
        <dbReference type="Rhea" id="RHEA:20121"/>
        <dbReference type="Rhea" id="RHEA-COMP:9662"/>
        <dbReference type="Rhea" id="RHEA-COMP:9681"/>
        <dbReference type="ChEBI" id="CHEBI:30616"/>
        <dbReference type="ChEBI" id="CHEBI:33019"/>
        <dbReference type="ChEBI" id="CHEBI:58359"/>
        <dbReference type="ChEBI" id="CHEBI:78442"/>
        <dbReference type="ChEBI" id="CHEBI:78521"/>
        <dbReference type="ChEBI" id="CHEBI:456215"/>
        <dbReference type="EC" id="6.1.1.18"/>
    </reaction>
</comment>
<comment type="subunit">
    <text evidence="2">Monomer. Part of a multisubunit complex that groups tRNA ligases for Arg (RARS1), Asp (DARS1), Gln (QARS1), Ile (IARS1), Leu (LARS1), Lys (KARS1), Met (MARS1) the bifunctional ligase for Glu and Pro (EPRS1) and the auxiliary subunits AIMP1/p43, AIMP2/p38 and EEF1E1/p18. Interacts with RARS1. Part of a complex composed of RARS1, QARS1 and AIMP1.</text>
</comment>
<comment type="subcellular location">
    <subcellularLocation>
        <location evidence="2">Cytoplasm</location>
        <location evidence="2">Cytosol</location>
    </subcellularLocation>
    <subcellularLocation>
        <location evidence="2">Cytoplasm</location>
    </subcellularLocation>
</comment>
<comment type="similarity">
    <text evidence="3">Belongs to the class-I aminoacyl-tRNA synthetase family.</text>
</comment>
<proteinExistence type="evidence at transcript level"/>
<name>SYQ_BOVIN</name>
<evidence type="ECO:0000250" key="1">
    <source>
        <dbReference type="UniProtKB" id="P00962"/>
    </source>
</evidence>
<evidence type="ECO:0000250" key="2">
    <source>
        <dbReference type="UniProtKB" id="P47897"/>
    </source>
</evidence>
<evidence type="ECO:0000305" key="3"/>
<feature type="initiator methionine" description="Removed" evidence="2">
    <location>
        <position position="1"/>
    </location>
</feature>
<feature type="chain" id="PRO_0000245023" description="Glutamine--tRNA ligase">
    <location>
        <begin position="2"/>
        <end position="775"/>
    </location>
</feature>
<feature type="short sequence motif" description="'HIGH' region">
    <location>
        <begin position="270"/>
        <end position="280"/>
    </location>
</feature>
<feature type="short sequence motif" description="'KMSKS' region">
    <location>
        <begin position="493"/>
        <end position="497"/>
    </location>
</feature>
<feature type="binding site" evidence="1">
    <location>
        <begin position="271"/>
        <end position="273"/>
    </location>
    <ligand>
        <name>ATP</name>
        <dbReference type="ChEBI" id="CHEBI:30616"/>
    </ligand>
</feature>
<feature type="binding site" evidence="1">
    <location>
        <begin position="277"/>
        <end position="283"/>
    </location>
    <ligand>
        <name>ATP</name>
        <dbReference type="ChEBI" id="CHEBI:30616"/>
    </ligand>
</feature>
<feature type="binding site" evidence="1">
    <location>
        <position position="303"/>
    </location>
    <ligand>
        <name>L-glutamine</name>
        <dbReference type="ChEBI" id="CHEBI:58359"/>
    </ligand>
</feature>
<feature type="binding site" evidence="1">
    <location>
        <position position="438"/>
    </location>
    <ligand>
        <name>L-glutamine</name>
        <dbReference type="ChEBI" id="CHEBI:58359"/>
    </ligand>
</feature>
<feature type="binding site" evidence="1">
    <location>
        <position position="457"/>
    </location>
    <ligand>
        <name>ATP</name>
        <dbReference type="ChEBI" id="CHEBI:30616"/>
    </ligand>
</feature>
<feature type="binding site" evidence="1">
    <location>
        <begin position="486"/>
        <end position="487"/>
    </location>
    <ligand>
        <name>ATP</name>
        <dbReference type="ChEBI" id="CHEBI:30616"/>
    </ligand>
</feature>
<feature type="binding site" evidence="1">
    <location>
        <begin position="494"/>
        <end position="496"/>
    </location>
    <ligand>
        <name>ATP</name>
        <dbReference type="ChEBI" id="CHEBI:30616"/>
    </ligand>
</feature>
<feature type="modified residue" description="N-acetylalanine" evidence="2">
    <location>
        <position position="2"/>
    </location>
</feature>
<feature type="modified residue" description="Phosphoserine" evidence="2">
    <location>
        <position position="70"/>
    </location>
</feature>
<feature type="modified residue" description="N6-acetyllysine" evidence="2">
    <location>
        <position position="309"/>
    </location>
</feature>
<feature type="modified residue" description="Phosphoserine" evidence="2">
    <location>
        <position position="495"/>
    </location>
</feature>
<protein>
    <recommendedName>
        <fullName>Glutamine--tRNA ligase</fullName>
        <ecNumber evidence="2">6.1.1.18</ecNumber>
    </recommendedName>
    <alternativeName>
        <fullName>Glutaminyl-tRNA synthetase</fullName>
        <shortName>GlnRS</shortName>
    </alternativeName>
</protein>
<organism>
    <name type="scientific">Bos taurus</name>
    <name type="common">Bovine</name>
    <dbReference type="NCBI Taxonomy" id="9913"/>
    <lineage>
        <taxon>Eukaryota</taxon>
        <taxon>Metazoa</taxon>
        <taxon>Chordata</taxon>
        <taxon>Craniata</taxon>
        <taxon>Vertebrata</taxon>
        <taxon>Euteleostomi</taxon>
        <taxon>Mammalia</taxon>
        <taxon>Eutheria</taxon>
        <taxon>Laurasiatheria</taxon>
        <taxon>Artiodactyla</taxon>
        <taxon>Ruminantia</taxon>
        <taxon>Pecora</taxon>
        <taxon>Bovidae</taxon>
        <taxon>Bovinae</taxon>
        <taxon>Bos</taxon>
    </lineage>
</organism>
<gene>
    <name type="primary">QARS1</name>
    <name type="synonym">QARS</name>
</gene>
<accession>Q3MHH4</accession>
<sequence>MAALDSLSLFTGLGLSEQKARETLKNTVLSAQLREAATQAQQTLGSSIDKATGTLLYGLASRLRDPRRLSFLVSYITSRKIHTETQLSAALEYVRSHPLDPINTEDFEQECGVGVVVTPEQIEEAVEAAINRHRAKLLVERYHFSMGLLMGEARAALKWADGKMIKHEVDMQVLHLLGPKTETDLEKKPKVAKARPEETDQRTAKDVVENGEVVVQTLSLMEQLRGEALKFHKPGENYKTPGYVTTPHTMDLLKQHLDITGGQVRTRFPPEPNGILHIGHAKAINFNFGYAKANNGICFLRFDDTNPEKEEAKFFTAIYDMVAWLGYTPYKVTYASDYFDQLYAWAVELIRRDQAYVCHQRGEELKGHNPLPSPWRDRPIEESLLLFEAMRKGKFAEGEATLRMKLVMEDGKMDPVAYRVKYTPHHRTGDTWCIYPTYDYTHCLCDSIEHITHSLCTKEFQARRSSYFWLCNALDVYCPVQWEYGRLNLHYAVVSKRKILQLVAAGAVRDWDDPRLFTLTALRRRGFPPEAINNFCARVGVTVAQTTMEPHLLEACVRDVLNDTAPRAMAVLEPLQVVITNFPATKALDIQVPNFPADETKGFHQVPFGSTVFIERMDFKEEPEPGYKRLAWGQPVGLRHTGYVIELQHVVKGPSGCVESLKVTCRRADAGEKPKAFIHWVSQPLTCEIRLYERLFQHKNPEDPAEVPGGFLSDLNPASLQVVEAALVDCSVALAKPFDKFQFERLGYFSVDPDSNQGQLVFNRTVTLKEDPGKV</sequence>
<keyword id="KW-0007">Acetylation</keyword>
<keyword id="KW-0030">Aminoacyl-tRNA synthetase</keyword>
<keyword id="KW-0067">ATP-binding</keyword>
<keyword id="KW-0963">Cytoplasm</keyword>
<keyword id="KW-0436">Ligase</keyword>
<keyword id="KW-0547">Nucleotide-binding</keyword>
<keyword id="KW-0597">Phosphoprotein</keyword>
<keyword id="KW-0648">Protein biosynthesis</keyword>
<keyword id="KW-1185">Reference proteome</keyword>
<dbReference type="EC" id="6.1.1.18" evidence="2"/>
<dbReference type="EMBL" id="BT025487">
    <property type="protein sequence ID" value="ABF57443.1"/>
    <property type="molecule type" value="mRNA"/>
</dbReference>
<dbReference type="EMBL" id="BC105237">
    <property type="protein sequence ID" value="AAI05238.1"/>
    <property type="molecule type" value="mRNA"/>
</dbReference>
<dbReference type="RefSeq" id="NP_001029640.1">
    <property type="nucleotide sequence ID" value="NM_001034468.2"/>
</dbReference>
<dbReference type="SMR" id="Q3MHH4"/>
<dbReference type="FunCoup" id="Q3MHH4">
    <property type="interactions" value="3525"/>
</dbReference>
<dbReference type="IntAct" id="Q3MHH4">
    <property type="interactions" value="2"/>
</dbReference>
<dbReference type="STRING" id="9913.ENSBTAP00000025191"/>
<dbReference type="BindingDB" id="Q3MHH4"/>
<dbReference type="PaxDb" id="9913-ENSBTAP00000025191"/>
<dbReference type="PeptideAtlas" id="Q3MHH4"/>
<dbReference type="Ensembl" id="ENSBTAT00000025191.6">
    <property type="protein sequence ID" value="ENSBTAP00000025191.6"/>
    <property type="gene ID" value="ENSBTAG00000018928.7"/>
</dbReference>
<dbReference type="GeneID" id="514586"/>
<dbReference type="KEGG" id="bta:514586"/>
<dbReference type="CTD" id="5859"/>
<dbReference type="VEuPathDB" id="HostDB:ENSBTAG00000018928"/>
<dbReference type="VGNC" id="VGNC:33595">
    <property type="gene designation" value="QARS1"/>
</dbReference>
<dbReference type="eggNOG" id="KOG1148">
    <property type="taxonomic scope" value="Eukaryota"/>
</dbReference>
<dbReference type="GeneTree" id="ENSGT00550000074972"/>
<dbReference type="InParanoid" id="Q3MHH4"/>
<dbReference type="OMA" id="TWCIYPM"/>
<dbReference type="OrthoDB" id="10250478at2759"/>
<dbReference type="Reactome" id="R-BTA-9856649">
    <property type="pathway name" value="Transcriptional and post-translational regulation of MITF-M expression and activity"/>
</dbReference>
<dbReference type="Proteomes" id="UP000009136">
    <property type="component" value="Chromosome 22"/>
</dbReference>
<dbReference type="Bgee" id="ENSBTAG00000018928">
    <property type="expression patterns" value="Expressed in vas deferens and 106 other cell types or tissues"/>
</dbReference>
<dbReference type="GO" id="GO:0017101">
    <property type="term" value="C:aminoacyl-tRNA synthetase multienzyme complex"/>
    <property type="evidence" value="ECO:0000250"/>
    <property type="project" value="UniProtKB"/>
</dbReference>
<dbReference type="GO" id="GO:0005737">
    <property type="term" value="C:cytoplasm"/>
    <property type="evidence" value="ECO:0000250"/>
    <property type="project" value="UniProtKB"/>
</dbReference>
<dbReference type="GO" id="GO:0005829">
    <property type="term" value="C:cytosol"/>
    <property type="evidence" value="ECO:0000318"/>
    <property type="project" value="GO_Central"/>
</dbReference>
<dbReference type="GO" id="GO:0005524">
    <property type="term" value="F:ATP binding"/>
    <property type="evidence" value="ECO:0007669"/>
    <property type="project" value="UniProtKB-KW"/>
</dbReference>
<dbReference type="GO" id="GO:0004819">
    <property type="term" value="F:glutamine-tRNA ligase activity"/>
    <property type="evidence" value="ECO:0000250"/>
    <property type="project" value="UniProtKB"/>
</dbReference>
<dbReference type="GO" id="GO:0019901">
    <property type="term" value="F:protein kinase binding"/>
    <property type="evidence" value="ECO:0007669"/>
    <property type="project" value="Ensembl"/>
</dbReference>
<dbReference type="GO" id="GO:0004860">
    <property type="term" value="F:protein kinase inhibitor activity"/>
    <property type="evidence" value="ECO:0007669"/>
    <property type="project" value="Ensembl"/>
</dbReference>
<dbReference type="GO" id="GO:0007420">
    <property type="term" value="P:brain development"/>
    <property type="evidence" value="ECO:0000250"/>
    <property type="project" value="UniProtKB"/>
</dbReference>
<dbReference type="GO" id="GO:0006425">
    <property type="term" value="P:glutaminyl-tRNA aminoacylation"/>
    <property type="evidence" value="ECO:0000250"/>
    <property type="project" value="UniProtKB"/>
</dbReference>
<dbReference type="GO" id="GO:2001234">
    <property type="term" value="P:negative regulation of apoptotic signaling pathway"/>
    <property type="evidence" value="ECO:0007669"/>
    <property type="project" value="Ensembl"/>
</dbReference>
<dbReference type="GO" id="GO:0045892">
    <property type="term" value="P:negative regulation of DNA-templated transcription"/>
    <property type="evidence" value="ECO:0007669"/>
    <property type="project" value="Ensembl"/>
</dbReference>
<dbReference type="GO" id="GO:0032873">
    <property type="term" value="P:negative regulation of stress-activated MAPK cascade"/>
    <property type="evidence" value="ECO:0007669"/>
    <property type="project" value="Ensembl"/>
</dbReference>
<dbReference type="CDD" id="cd00807">
    <property type="entry name" value="GlnRS_core"/>
    <property type="match status" value="1"/>
</dbReference>
<dbReference type="FunFam" id="1.10.1160.10:FF:000001">
    <property type="entry name" value="Glutamine--tRNA ligase"/>
    <property type="match status" value="1"/>
</dbReference>
<dbReference type="FunFam" id="1.10.8.1290:FF:000001">
    <property type="entry name" value="Glutamine--tRNA ligase"/>
    <property type="match status" value="1"/>
</dbReference>
<dbReference type="FunFam" id="3.90.800.10:FF:000001">
    <property type="entry name" value="Glutamine--tRNA ligase"/>
    <property type="match status" value="1"/>
</dbReference>
<dbReference type="FunFam" id="1.10.10.2420:FF:000001">
    <property type="entry name" value="Glutamine--tRNA ligase cytoplasmic"/>
    <property type="match status" value="1"/>
</dbReference>
<dbReference type="FunFam" id="3.40.50.620:FF:000049">
    <property type="entry name" value="Probable glutamine--tRNA ligase"/>
    <property type="match status" value="1"/>
</dbReference>
<dbReference type="FunFam" id="2.40.240.10:FF:000008">
    <property type="entry name" value="probable glutamine--tRNA ligase"/>
    <property type="match status" value="1"/>
</dbReference>
<dbReference type="FunFam" id="2.40.240.10:FF:000006">
    <property type="entry name" value="Putative glutamine--tRNA ligase"/>
    <property type="match status" value="1"/>
</dbReference>
<dbReference type="Gene3D" id="1.10.10.2420">
    <property type="match status" value="1"/>
</dbReference>
<dbReference type="Gene3D" id="1.10.8.1290">
    <property type="entry name" value="Glutaminyl-tRNA synthetase, non-specific RNA binding region part 1, domain 1"/>
    <property type="match status" value="1"/>
</dbReference>
<dbReference type="Gene3D" id="3.40.50.620">
    <property type="entry name" value="HUPs"/>
    <property type="match status" value="1"/>
</dbReference>
<dbReference type="Gene3D" id="2.40.240.10">
    <property type="entry name" value="Ribosomal Protein L25, Chain P"/>
    <property type="match status" value="2"/>
</dbReference>
<dbReference type="InterPro" id="IPR001412">
    <property type="entry name" value="aa-tRNA-synth_I_CS"/>
</dbReference>
<dbReference type="InterPro" id="IPR004514">
    <property type="entry name" value="Gln-tRNA-synth"/>
</dbReference>
<dbReference type="InterPro" id="IPR007638">
    <property type="entry name" value="Gln-tRNA-synth_Ib_RNA-bd_2"/>
</dbReference>
<dbReference type="InterPro" id="IPR007639">
    <property type="entry name" value="Gln-tRNA-synth_Ib_RNA-bd_N"/>
</dbReference>
<dbReference type="InterPro" id="IPR042558">
    <property type="entry name" value="Gln-tRNA-synth_Ib_RNA-bd_N_1"/>
</dbReference>
<dbReference type="InterPro" id="IPR042559">
    <property type="entry name" value="Gln-tRNA-synth_Ib_RNA-bd_N_2"/>
</dbReference>
<dbReference type="InterPro" id="IPR050132">
    <property type="entry name" value="Gln/Glu-tRNA_Ligase"/>
</dbReference>
<dbReference type="InterPro" id="IPR000924">
    <property type="entry name" value="Glu/Gln-tRNA-synth"/>
</dbReference>
<dbReference type="InterPro" id="IPR020058">
    <property type="entry name" value="Glu/Gln-tRNA-synth_Ib_cat-dom"/>
</dbReference>
<dbReference type="InterPro" id="IPR020059">
    <property type="entry name" value="Glu/Gln-tRNA-synth_Ib_codon-bd"/>
</dbReference>
<dbReference type="InterPro" id="IPR020056">
    <property type="entry name" value="Rbsml_bL25/Gln-tRNA_synth_N"/>
</dbReference>
<dbReference type="InterPro" id="IPR011035">
    <property type="entry name" value="Ribosomal_bL25/Gln-tRNA_synth"/>
</dbReference>
<dbReference type="InterPro" id="IPR014729">
    <property type="entry name" value="Rossmann-like_a/b/a_fold"/>
</dbReference>
<dbReference type="InterPro" id="IPR049437">
    <property type="entry name" value="tRNA-synt_1c_C2"/>
</dbReference>
<dbReference type="NCBIfam" id="TIGR00440">
    <property type="entry name" value="glnS"/>
    <property type="match status" value="1"/>
</dbReference>
<dbReference type="PANTHER" id="PTHR43097:SF4">
    <property type="entry name" value="GLUTAMINE--TRNA LIGASE"/>
    <property type="match status" value="1"/>
</dbReference>
<dbReference type="PANTHER" id="PTHR43097">
    <property type="entry name" value="GLUTAMINE-TRNA LIGASE"/>
    <property type="match status" value="1"/>
</dbReference>
<dbReference type="Pfam" id="PF00749">
    <property type="entry name" value="tRNA-synt_1c"/>
    <property type="match status" value="1"/>
</dbReference>
<dbReference type="Pfam" id="PF03950">
    <property type="entry name" value="tRNA-synt_1c_C"/>
    <property type="match status" value="1"/>
</dbReference>
<dbReference type="Pfam" id="PF20974">
    <property type="entry name" value="tRNA-synt_1c_C2"/>
    <property type="match status" value="1"/>
</dbReference>
<dbReference type="Pfam" id="PF04558">
    <property type="entry name" value="tRNA_synt_1c_R1"/>
    <property type="match status" value="1"/>
</dbReference>
<dbReference type="Pfam" id="PF04557">
    <property type="entry name" value="tRNA_synt_1c_R2"/>
    <property type="match status" value="1"/>
</dbReference>
<dbReference type="PRINTS" id="PR00987">
    <property type="entry name" value="TRNASYNTHGLU"/>
</dbReference>
<dbReference type="SUPFAM" id="SSF52374">
    <property type="entry name" value="Nucleotidylyl transferase"/>
    <property type="match status" value="1"/>
</dbReference>
<dbReference type="SUPFAM" id="SSF50715">
    <property type="entry name" value="Ribosomal protein L25-like"/>
    <property type="match status" value="1"/>
</dbReference>
<dbReference type="PROSITE" id="PS00178">
    <property type="entry name" value="AA_TRNA_LIGASE_I"/>
    <property type="match status" value="1"/>
</dbReference>